<feature type="chain" id="PRO_1000132347" description="DNA primase small subunit PriS">
    <location>
        <begin position="1"/>
        <end position="357"/>
    </location>
</feature>
<feature type="active site" evidence="1">
    <location>
        <position position="105"/>
    </location>
</feature>
<feature type="active site" evidence="1">
    <location>
        <position position="107"/>
    </location>
</feature>
<feature type="active site" evidence="1">
    <location>
        <position position="259"/>
    </location>
</feature>
<name>PRIS_METM6</name>
<sequence length="357" mass="42095">MNDNPAVNKVFNEISSLYKQYFEYAIKVRKWLEIPDDLSHREIGYGMLKKVDNRNMSFNTDGEYLTWVLKESPFHLYKSLSYMEYPDVVGGAAKKGLFKREVAFDIDTHKTEKCTHDDSWICEECLGEARNQVLILIEDFLFPDFGLSEKDLKIVFTGNRGYHIYLKPENPELLKKIEKWGKNERRYFIEYILGKNLNLRNMGSRWKNILIREFKKNKIATKKFEKTSDWKTEIDTRKDTTRRTIYETIGKVKSRLELDEKVMDDDIRLLRTIGSLHGYTGLMVKEITYSSLKNNQFDPLNHGVFSKFHKIMYKVNIKQEIDPLTLKGDTFDHKSTEIPASYLLFLFGHGIDFEILE</sequence>
<organism>
    <name type="scientific">Methanococcus maripaludis (strain C6 / ATCC BAA-1332)</name>
    <dbReference type="NCBI Taxonomy" id="444158"/>
    <lineage>
        <taxon>Archaea</taxon>
        <taxon>Methanobacteriati</taxon>
        <taxon>Methanobacteriota</taxon>
        <taxon>Methanomada group</taxon>
        <taxon>Methanococci</taxon>
        <taxon>Methanococcales</taxon>
        <taxon>Methanococcaceae</taxon>
        <taxon>Methanococcus</taxon>
    </lineage>
</organism>
<comment type="function">
    <text evidence="1">Catalytic subunit of DNA primase, an RNA polymerase that catalyzes the synthesis of short RNA molecules used as primers for DNA polymerase during DNA replication. The small subunit contains the primase catalytic core and has DNA synthesis activity on its own. Binding to the large subunit stabilizes and modulates the activity, increasing the rate of DNA synthesis while decreasing the length of the DNA fragments, and conferring RNA synthesis capability. The DNA polymerase activity may enable DNA primase to also catalyze primer extension after primer synthesis. May also play a role in DNA repair.</text>
</comment>
<comment type="cofactor">
    <cofactor evidence="1">
        <name>Mg(2+)</name>
        <dbReference type="ChEBI" id="CHEBI:18420"/>
    </cofactor>
    <cofactor evidence="1">
        <name>Mn(2+)</name>
        <dbReference type="ChEBI" id="CHEBI:29035"/>
    </cofactor>
</comment>
<comment type="subunit">
    <text evidence="1">Heterodimer of a small subunit (PriS) and a large subunit (PriL).</text>
</comment>
<comment type="similarity">
    <text evidence="1">Belongs to the eukaryotic-type primase small subunit family.</text>
</comment>
<protein>
    <recommendedName>
        <fullName evidence="1">DNA primase small subunit PriS</fullName>
        <ecNumber evidence="1">2.7.7.-</ecNumber>
    </recommendedName>
</protein>
<keyword id="KW-0235">DNA replication</keyword>
<keyword id="KW-0240">DNA-directed RNA polymerase</keyword>
<keyword id="KW-0460">Magnesium</keyword>
<keyword id="KW-0464">Manganese</keyword>
<keyword id="KW-0479">Metal-binding</keyword>
<keyword id="KW-0548">Nucleotidyltransferase</keyword>
<keyword id="KW-0639">Primosome</keyword>
<keyword id="KW-0804">Transcription</keyword>
<keyword id="KW-0808">Transferase</keyword>
<reference key="1">
    <citation type="submission" date="2007-10" db="EMBL/GenBank/DDBJ databases">
        <title>Complete sequence of Methanococcus maripaludis C6.</title>
        <authorList>
            <consortium name="US DOE Joint Genome Institute"/>
            <person name="Copeland A."/>
            <person name="Lucas S."/>
            <person name="Lapidus A."/>
            <person name="Barry K."/>
            <person name="Glavina del Rio T."/>
            <person name="Dalin E."/>
            <person name="Tice H."/>
            <person name="Pitluck S."/>
            <person name="Clum A."/>
            <person name="Schmutz J."/>
            <person name="Larimer F."/>
            <person name="Land M."/>
            <person name="Hauser L."/>
            <person name="Kyrpides N."/>
            <person name="Mikhailova N."/>
            <person name="Sieprawska-Lupa M."/>
            <person name="Whitman W.B."/>
            <person name="Richardson P."/>
        </authorList>
    </citation>
    <scope>NUCLEOTIDE SEQUENCE [LARGE SCALE GENOMIC DNA]</scope>
    <source>
        <strain>C6 / ATCC BAA-1332</strain>
    </source>
</reference>
<proteinExistence type="inferred from homology"/>
<gene>
    <name evidence="1" type="primary">priS</name>
    <name type="synonym">priA</name>
    <name type="ordered locus">MmarC6_0877</name>
</gene>
<dbReference type="EC" id="2.7.7.-" evidence="1"/>
<dbReference type="EMBL" id="CP000867">
    <property type="protein sequence ID" value="ABX01692.1"/>
    <property type="molecule type" value="Genomic_DNA"/>
</dbReference>
<dbReference type="SMR" id="A9A8L9"/>
<dbReference type="STRING" id="444158.MmarC6_0877"/>
<dbReference type="KEGG" id="mmx:MmarC6_0877"/>
<dbReference type="eggNOG" id="arCOG04110">
    <property type="taxonomic scope" value="Archaea"/>
</dbReference>
<dbReference type="HOGENOM" id="CLU_056123_1_0_2"/>
<dbReference type="OrthoDB" id="31125at2157"/>
<dbReference type="PhylomeDB" id="A9A8L9"/>
<dbReference type="GO" id="GO:0000428">
    <property type="term" value="C:DNA-directed RNA polymerase complex"/>
    <property type="evidence" value="ECO:0007669"/>
    <property type="project" value="UniProtKB-KW"/>
</dbReference>
<dbReference type="GO" id="GO:1990077">
    <property type="term" value="C:primosome complex"/>
    <property type="evidence" value="ECO:0007669"/>
    <property type="project" value="UniProtKB-KW"/>
</dbReference>
<dbReference type="GO" id="GO:0003899">
    <property type="term" value="F:DNA-directed RNA polymerase activity"/>
    <property type="evidence" value="ECO:0007669"/>
    <property type="project" value="InterPro"/>
</dbReference>
<dbReference type="GO" id="GO:0046872">
    <property type="term" value="F:metal ion binding"/>
    <property type="evidence" value="ECO:0007669"/>
    <property type="project" value="UniProtKB-KW"/>
</dbReference>
<dbReference type="GO" id="GO:0006269">
    <property type="term" value="P:DNA replication, synthesis of primer"/>
    <property type="evidence" value="ECO:0007669"/>
    <property type="project" value="UniProtKB-UniRule"/>
</dbReference>
<dbReference type="CDD" id="cd04860">
    <property type="entry name" value="AE_Prim_S"/>
    <property type="match status" value="1"/>
</dbReference>
<dbReference type="Gene3D" id="3.90.920.10">
    <property type="entry name" value="DNA primase, PRIM domain"/>
    <property type="match status" value="1"/>
</dbReference>
<dbReference type="HAMAP" id="MF_00700">
    <property type="entry name" value="DNA_primase_sml_arc"/>
    <property type="match status" value="1"/>
</dbReference>
<dbReference type="InterPro" id="IPR002755">
    <property type="entry name" value="DNA_primase_S"/>
</dbReference>
<dbReference type="InterPro" id="IPR014052">
    <property type="entry name" value="DNA_primase_ssu_euk/arc"/>
</dbReference>
<dbReference type="InterPro" id="IPR023639">
    <property type="entry name" value="DNA_primase_ssu_PriS"/>
</dbReference>
<dbReference type="NCBIfam" id="TIGR00335">
    <property type="entry name" value="primase_sml"/>
    <property type="match status" value="1"/>
</dbReference>
<dbReference type="PANTHER" id="PTHR10536">
    <property type="entry name" value="DNA PRIMASE SMALL SUBUNIT"/>
    <property type="match status" value="1"/>
</dbReference>
<dbReference type="Pfam" id="PF01896">
    <property type="entry name" value="DNA_primase_S"/>
    <property type="match status" value="1"/>
</dbReference>
<dbReference type="SUPFAM" id="SSF56747">
    <property type="entry name" value="Prim-pol domain"/>
    <property type="match status" value="1"/>
</dbReference>
<accession>A9A8L9</accession>
<evidence type="ECO:0000255" key="1">
    <source>
        <dbReference type="HAMAP-Rule" id="MF_00700"/>
    </source>
</evidence>